<sequence>MDPYKYRPSSAFNSPFWTTNSGAPVWNNNNSLTVGTRGPILLEDYHLVEKLANFDRERIPERVVHARGASAKGFFEVTHDVSHLTCADFLRAPGVQTPVIVRFSTVIHERGSPETLRDPRGFAVKFYTREGNFDLVGNNLPVFFVRDGMKFPDMVHALKPNPKNHIQENWRILDFFSHFPESLHMFSFLFDDLGVPQDYRHMDGFGVNTYTLINKAGKAVYVKFHWKTTSGVKCLLEEEAIKVGGANHSHATQDLHDSIAAGNYPEWKLFIQTIDPEHEDKFDFDPLDVTKTWPEDIIPLQPVGRLVLNKNIDNFFAENEQLAFCPAIIVPGVYYSDDKMLQTRIFSYADSQRHRLGPNYLLLPANAPKSAHHNNHHEGFMNFIHRDEEVNYFPSRYDPVRHAEKFPIPPAVFSGRREKIAIEKENNFKQAGERFRSWAPDRQDRFIRRWVDALSDPRVTHEIRSVWISYWSQADRSLGQKIASHLNMRPNI</sequence>
<protein>
    <recommendedName>
        <fullName>Catalase</fullName>
        <ecNumber evidence="3">1.11.1.6</ecNumber>
    </recommendedName>
</protein>
<organism>
    <name type="scientific">Vigna radiata var. radiata</name>
    <name type="common">Mung bean</name>
    <name type="synonym">Phaseolus aureus</name>
    <dbReference type="NCBI Taxonomy" id="3916"/>
    <lineage>
        <taxon>Eukaryota</taxon>
        <taxon>Viridiplantae</taxon>
        <taxon>Streptophyta</taxon>
        <taxon>Embryophyta</taxon>
        <taxon>Tracheophyta</taxon>
        <taxon>Spermatophyta</taxon>
        <taxon>Magnoliopsida</taxon>
        <taxon>eudicotyledons</taxon>
        <taxon>Gunneridae</taxon>
        <taxon>Pentapetalae</taxon>
        <taxon>rosids</taxon>
        <taxon>fabids</taxon>
        <taxon>Fabales</taxon>
        <taxon>Fabaceae</taxon>
        <taxon>Papilionoideae</taxon>
        <taxon>50 kb inversion clade</taxon>
        <taxon>NPAAA clade</taxon>
        <taxon>indigoferoid/millettioid clade</taxon>
        <taxon>Phaseoleae</taxon>
        <taxon>Vigna</taxon>
    </lineage>
</organism>
<keyword id="KW-0963">Cytoplasm</keyword>
<keyword id="KW-0349">Heme</keyword>
<keyword id="KW-0376">Hydrogen peroxide</keyword>
<keyword id="KW-0408">Iron</keyword>
<keyword id="KW-0479">Metal-binding</keyword>
<keyword id="KW-0560">Oxidoreductase</keyword>
<keyword id="KW-0575">Peroxidase</keyword>
<keyword id="KW-0576">Peroxisome</keyword>
<keyword id="KW-1185">Reference proteome</keyword>
<dbReference type="EC" id="1.11.1.6" evidence="3"/>
<dbReference type="EMBL" id="D13557">
    <property type="protein sequence ID" value="BAA02755.1"/>
    <property type="molecule type" value="mRNA"/>
</dbReference>
<dbReference type="PIR" id="T10902">
    <property type="entry name" value="T10902"/>
</dbReference>
<dbReference type="RefSeq" id="NP_001304079.1">
    <property type="nucleotide sequence ID" value="NM_001317150.1"/>
</dbReference>
<dbReference type="SMR" id="P32290"/>
<dbReference type="STRING" id="3916.P32290"/>
<dbReference type="PeroxiBase" id="6264">
    <property type="entry name" value="PauKat01"/>
</dbReference>
<dbReference type="GeneID" id="106762083"/>
<dbReference type="KEGG" id="vra:106762083"/>
<dbReference type="OrthoDB" id="6880011at2759"/>
<dbReference type="Proteomes" id="UP000087766">
    <property type="component" value="Chromosome 5"/>
</dbReference>
<dbReference type="GO" id="GO:0005829">
    <property type="term" value="C:cytosol"/>
    <property type="evidence" value="ECO:0007669"/>
    <property type="project" value="UniProtKB-SubCell"/>
</dbReference>
<dbReference type="GO" id="GO:0005782">
    <property type="term" value="C:peroxisomal matrix"/>
    <property type="evidence" value="ECO:0007669"/>
    <property type="project" value="UniProtKB-SubCell"/>
</dbReference>
<dbReference type="GO" id="GO:0005886">
    <property type="term" value="C:plasma membrane"/>
    <property type="evidence" value="ECO:0007669"/>
    <property type="project" value="TreeGrafter"/>
</dbReference>
<dbReference type="GO" id="GO:0004096">
    <property type="term" value="F:catalase activity"/>
    <property type="evidence" value="ECO:0007669"/>
    <property type="project" value="UniProtKB-EC"/>
</dbReference>
<dbReference type="GO" id="GO:0020037">
    <property type="term" value="F:heme binding"/>
    <property type="evidence" value="ECO:0007669"/>
    <property type="project" value="InterPro"/>
</dbReference>
<dbReference type="GO" id="GO:0046872">
    <property type="term" value="F:metal ion binding"/>
    <property type="evidence" value="ECO:0007669"/>
    <property type="project" value="UniProtKB-KW"/>
</dbReference>
<dbReference type="GO" id="GO:0042744">
    <property type="term" value="P:hydrogen peroxide catabolic process"/>
    <property type="evidence" value="ECO:0007669"/>
    <property type="project" value="UniProtKB-KW"/>
</dbReference>
<dbReference type="GO" id="GO:0042542">
    <property type="term" value="P:response to hydrogen peroxide"/>
    <property type="evidence" value="ECO:0007669"/>
    <property type="project" value="TreeGrafter"/>
</dbReference>
<dbReference type="CDD" id="cd08154">
    <property type="entry name" value="catalase_clade_1"/>
    <property type="match status" value="1"/>
</dbReference>
<dbReference type="FunFam" id="2.40.180.10:FF:000002">
    <property type="entry name" value="Catalase"/>
    <property type="match status" value="1"/>
</dbReference>
<dbReference type="Gene3D" id="2.40.180.10">
    <property type="entry name" value="Catalase core domain"/>
    <property type="match status" value="1"/>
</dbReference>
<dbReference type="InterPro" id="IPR018028">
    <property type="entry name" value="Catalase"/>
</dbReference>
<dbReference type="InterPro" id="IPR024708">
    <property type="entry name" value="Catalase_AS"/>
</dbReference>
<dbReference type="InterPro" id="IPR024711">
    <property type="entry name" value="Catalase_clade1/3"/>
</dbReference>
<dbReference type="InterPro" id="IPR011614">
    <property type="entry name" value="Catalase_core"/>
</dbReference>
<dbReference type="InterPro" id="IPR002226">
    <property type="entry name" value="Catalase_haem_BS"/>
</dbReference>
<dbReference type="InterPro" id="IPR010582">
    <property type="entry name" value="Catalase_immune_responsive"/>
</dbReference>
<dbReference type="InterPro" id="IPR020835">
    <property type="entry name" value="Catalase_sf"/>
</dbReference>
<dbReference type="PANTHER" id="PTHR11465">
    <property type="entry name" value="CATALASE"/>
    <property type="match status" value="1"/>
</dbReference>
<dbReference type="PANTHER" id="PTHR11465:SF23">
    <property type="entry name" value="CATALASE-2"/>
    <property type="match status" value="1"/>
</dbReference>
<dbReference type="Pfam" id="PF00199">
    <property type="entry name" value="Catalase"/>
    <property type="match status" value="1"/>
</dbReference>
<dbReference type="Pfam" id="PF06628">
    <property type="entry name" value="Catalase-rel"/>
    <property type="match status" value="1"/>
</dbReference>
<dbReference type="PIRSF" id="PIRSF038928">
    <property type="entry name" value="Catalase_clade1-3"/>
    <property type="match status" value="1"/>
</dbReference>
<dbReference type="PRINTS" id="PR00067">
    <property type="entry name" value="CATALASE"/>
</dbReference>
<dbReference type="SMART" id="SM01060">
    <property type="entry name" value="Catalase"/>
    <property type="match status" value="1"/>
</dbReference>
<dbReference type="SUPFAM" id="SSF56634">
    <property type="entry name" value="Heme-dependent catalase-like"/>
    <property type="match status" value="1"/>
</dbReference>
<dbReference type="PROSITE" id="PS00437">
    <property type="entry name" value="CATALASE_1"/>
    <property type="match status" value="1"/>
</dbReference>
<dbReference type="PROSITE" id="PS00438">
    <property type="entry name" value="CATALASE_2"/>
    <property type="match status" value="1"/>
</dbReference>
<dbReference type="PROSITE" id="PS51402">
    <property type="entry name" value="CATALASE_3"/>
    <property type="match status" value="1"/>
</dbReference>
<evidence type="ECO:0000250" key="1">
    <source>
        <dbReference type="UniProtKB" id="P04040"/>
    </source>
</evidence>
<evidence type="ECO:0000250" key="2">
    <source>
        <dbReference type="UniProtKB" id="P25819"/>
    </source>
</evidence>
<evidence type="ECO:0000255" key="3">
    <source>
        <dbReference type="PROSITE-ProRule" id="PRU10013"/>
    </source>
</evidence>
<evidence type="ECO:0000305" key="4"/>
<proteinExistence type="evidence at transcript level"/>
<feature type="chain" id="PRO_0000084955" description="Catalase">
    <location>
        <begin position="1"/>
        <end position="492"/>
    </location>
</feature>
<feature type="active site" evidence="3">
    <location>
        <position position="65"/>
    </location>
</feature>
<feature type="active site" evidence="3">
    <location>
        <position position="138"/>
    </location>
</feature>
<feature type="binding site" description="axial binding residue" evidence="1">
    <location>
        <position position="348"/>
    </location>
    <ligand>
        <name>heme</name>
        <dbReference type="ChEBI" id="CHEBI:30413"/>
    </ligand>
    <ligandPart>
        <name>Fe</name>
        <dbReference type="ChEBI" id="CHEBI:18248"/>
    </ligandPart>
</feature>
<reference key="1">
    <citation type="journal article" date="1993" name="Plant Physiol.">
        <title>cDNA for catalase from etiolated mung bean (Vigna radiata) hypocotyls.</title>
        <authorList>
            <person name="Mori H."/>
            <person name="Imaseki H."/>
        </authorList>
    </citation>
    <scope>NUCLEOTIDE SEQUENCE [MRNA]</scope>
</reference>
<accession>P32290</accession>
<comment type="function">
    <text evidence="1">Catalyzes the degradation of hydrogen peroxide (H(2)O(2)) generated by peroxisomal oxidases to water and oxygen, thereby protecting cells from the toxic effects of hydrogen peroxide.</text>
</comment>
<comment type="catalytic activity">
    <reaction evidence="3">
        <text>2 H2O2 = O2 + 2 H2O</text>
        <dbReference type="Rhea" id="RHEA:20309"/>
        <dbReference type="ChEBI" id="CHEBI:15377"/>
        <dbReference type="ChEBI" id="CHEBI:15379"/>
        <dbReference type="ChEBI" id="CHEBI:16240"/>
        <dbReference type="EC" id="1.11.1.6"/>
    </reaction>
</comment>
<comment type="cofactor">
    <cofactor evidence="1">
        <name>heme</name>
        <dbReference type="ChEBI" id="CHEBI:30413"/>
    </cofactor>
</comment>
<comment type="subunit">
    <text>Homotetramer.</text>
</comment>
<comment type="subcellular location">
    <subcellularLocation>
        <location evidence="2">Cytoplasm</location>
        <location evidence="2">Cytosol</location>
    </subcellularLocation>
    <subcellularLocation>
        <location evidence="2">Peroxisome matrix</location>
    </subcellularLocation>
</comment>
<comment type="similarity">
    <text evidence="4">Belongs to the catalase family.</text>
</comment>
<name>CATA_VIGRR</name>